<accession>Q9TT93</accession>
<accession>A6QLR5</accession>
<accession>Q7YS95</accession>
<protein>
    <recommendedName>
        <fullName>A disintegrin and metalloproteinase with thrombospondin motifs 4</fullName>
        <shortName>ADAM-TS 4</shortName>
        <shortName>ADAM-TS4</shortName>
        <shortName>ADAMTS-4</shortName>
        <ecNumber>3.4.24.82</ecNumber>
    </recommendedName>
    <alternativeName>
        <fullName>ADMP-1</fullName>
    </alternativeName>
    <alternativeName>
        <fullName>Aggrecanase-1</fullName>
    </alternativeName>
</protein>
<organism>
    <name type="scientific">Bos taurus</name>
    <name type="common">Bovine</name>
    <dbReference type="NCBI Taxonomy" id="9913"/>
    <lineage>
        <taxon>Eukaryota</taxon>
        <taxon>Metazoa</taxon>
        <taxon>Chordata</taxon>
        <taxon>Craniata</taxon>
        <taxon>Vertebrata</taxon>
        <taxon>Euteleostomi</taxon>
        <taxon>Mammalia</taxon>
        <taxon>Eutheria</taxon>
        <taxon>Laurasiatheria</taxon>
        <taxon>Artiodactyla</taxon>
        <taxon>Ruminantia</taxon>
        <taxon>Pecora</taxon>
        <taxon>Bovidae</taxon>
        <taxon>Bovinae</taxon>
        <taxon>Bos</taxon>
    </lineage>
</organism>
<keyword id="KW-0165">Cleavage on pair of basic residues</keyword>
<keyword id="KW-0903">Direct protein sequencing</keyword>
<keyword id="KW-1015">Disulfide bond</keyword>
<keyword id="KW-0272">Extracellular matrix</keyword>
<keyword id="KW-0325">Glycoprotein</keyword>
<keyword id="KW-0378">Hydrolase</keyword>
<keyword id="KW-0479">Metal-binding</keyword>
<keyword id="KW-0482">Metalloprotease</keyword>
<keyword id="KW-0645">Protease</keyword>
<keyword id="KW-1185">Reference proteome</keyword>
<keyword id="KW-0964">Secreted</keyword>
<keyword id="KW-0732">Signal</keyword>
<keyword id="KW-0862">Zinc</keyword>
<keyword id="KW-0865">Zymogen</keyword>
<name>ATS4_BOVIN</name>
<evidence type="ECO:0000250" key="1"/>
<evidence type="ECO:0000250" key="2">
    <source>
        <dbReference type="UniProtKB" id="O75173"/>
    </source>
</evidence>
<evidence type="ECO:0000255" key="3"/>
<evidence type="ECO:0000255" key="4">
    <source>
        <dbReference type="PROSITE-ProRule" id="PRU00210"/>
    </source>
</evidence>
<evidence type="ECO:0000255" key="5">
    <source>
        <dbReference type="PROSITE-ProRule" id="PRU00276"/>
    </source>
</evidence>
<evidence type="ECO:0000255" key="6">
    <source>
        <dbReference type="PROSITE-ProRule" id="PRU10095"/>
    </source>
</evidence>
<evidence type="ECO:0000256" key="7">
    <source>
        <dbReference type="SAM" id="MobiDB-lite"/>
    </source>
</evidence>
<evidence type="ECO:0000269" key="8">
    <source>
    </source>
</evidence>
<evidence type="ECO:0000305" key="9"/>
<reference key="1">
    <citation type="submission" date="2002-05" db="EMBL/GenBank/DDBJ databases">
        <title>Cloning and characterization of bovine aggrecanase-1.</title>
        <authorList>
            <person name="Arai M."/>
            <person name="Anderson D."/>
            <person name="Annis B."/>
            <person name="Collins-Racie L."/>
            <person name="Corcoran C."/>
            <person name="DiBlasio-Smith E."/>
            <person name="Morris E."/>
            <person name="Dorner A."/>
            <person name="LaVallie E."/>
        </authorList>
    </citation>
    <scope>NUCLEOTIDE SEQUENCE [MRNA]</scope>
</reference>
<reference key="2">
    <citation type="submission" date="2007-06" db="EMBL/GenBank/DDBJ databases">
        <authorList>
            <consortium name="NIH - Mammalian Gene Collection (MGC) project"/>
        </authorList>
    </citation>
    <scope>NUCLEOTIDE SEQUENCE [LARGE SCALE MRNA]</scope>
    <source>
        <strain>Hereford</strain>
        <tissue>Thalamus</tissue>
    </source>
</reference>
<reference key="3">
    <citation type="journal article" date="1999" name="Biochem. Biophys. Res. Commun.">
        <title>Expression of ADAMTS homologues in articular cartilage.</title>
        <authorList>
            <person name="Flannery C.R."/>
            <person name="Little C.B."/>
            <person name="Hughes C.E."/>
            <person name="Caterson B."/>
        </authorList>
    </citation>
    <scope>NUCLEOTIDE SEQUENCE [MRNA] OF 332-531</scope>
    <source>
        <tissue>Cartilage</tissue>
    </source>
</reference>
<reference key="4">
    <citation type="journal article" date="2000" name="J. Biol. Chem.">
        <title>n-3 fatty acids specifically modulate catabolic factors involved in articular cartilage degradation.</title>
        <authorList>
            <person name="Curtis C.L."/>
            <person name="Hughes C.E."/>
            <person name="Flannery C.R."/>
            <person name="Little C.B."/>
            <person name="Harwood J.L."/>
            <person name="Caterson B."/>
        </authorList>
    </citation>
    <scope>NUCLEOTIDE SEQUENCE [MRNA] OF 332-531</scope>
    <source>
        <tissue>Cartilage chondrocyte</tissue>
    </source>
</reference>
<reference key="5">
    <citation type="journal article" date="1999" name="Science">
        <title>Purification and cloning of aggrecanase-1: a member of the ADAMTS family of proteins.</title>
        <authorList>
            <person name="Tortorella M.D."/>
            <person name="Burn T.C."/>
            <person name="Pratta M.A."/>
            <person name="Abbaszade I."/>
            <person name="Hollis J.M."/>
            <person name="Liu R.-Q."/>
            <person name="Rosenfeld S.A."/>
            <person name="Copeland R.A."/>
            <person name="Decicco C.P."/>
            <person name="Wynn R."/>
            <person name="Rockwell A."/>
            <person name="Yang F."/>
            <person name="Duke J.L."/>
            <person name="Solomon K."/>
            <person name="George H."/>
            <person name="Bruckner R."/>
            <person name="Nagase H."/>
            <person name="Itoh Y."/>
            <person name="Ellis D.M."/>
            <person name="Ross H."/>
            <person name="Wiswall B.H."/>
            <person name="Murphy K."/>
            <person name="Hillman M.C. Jr."/>
            <person name="Hollis G.F."/>
            <person name="Newton R.C."/>
            <person name="Magolda R.L."/>
            <person name="Trzaskos J.M."/>
            <person name="Arner E.C."/>
        </authorList>
    </citation>
    <scope>PROTEIN SEQUENCE OF 213-239; 610-615 AND 626-637</scope>
    <scope>FUNCTION</scope>
    <source>
        <tissue>Cartilage</tissue>
    </source>
</reference>
<proteinExistence type="evidence at protein level"/>
<dbReference type="EC" id="3.4.24.82"/>
<dbReference type="EMBL" id="AF516915">
    <property type="protein sequence ID" value="AAP47196.1"/>
    <property type="molecule type" value="mRNA"/>
</dbReference>
<dbReference type="EMBL" id="BC148059">
    <property type="protein sequence ID" value="AAI48060.1"/>
    <property type="molecule type" value="mRNA"/>
</dbReference>
<dbReference type="EMBL" id="AF192770">
    <property type="protein sequence ID" value="AAF07176.1"/>
    <property type="molecule type" value="mRNA"/>
</dbReference>
<dbReference type="RefSeq" id="NP_858053.1">
    <property type="nucleotide sequence ID" value="NM_181667.1"/>
</dbReference>
<dbReference type="SMR" id="Q9TT93"/>
<dbReference type="FunCoup" id="Q9TT93">
    <property type="interactions" value="70"/>
</dbReference>
<dbReference type="STRING" id="9913.ENSBTAP00000017583"/>
<dbReference type="ChEMBL" id="CHEMBL3874"/>
<dbReference type="MEROPS" id="M12.221"/>
<dbReference type="GlyCosmos" id="Q9TT93">
    <property type="glycosylation" value="1 site, No reported glycans"/>
</dbReference>
<dbReference type="GlyGen" id="Q9TT93">
    <property type="glycosylation" value="1 site"/>
</dbReference>
<dbReference type="PaxDb" id="9913-ENSBTAP00000017583"/>
<dbReference type="GeneID" id="286806"/>
<dbReference type="KEGG" id="bta:286806"/>
<dbReference type="CTD" id="9507"/>
<dbReference type="eggNOG" id="KOG3538">
    <property type="taxonomic scope" value="Eukaryota"/>
</dbReference>
<dbReference type="InParanoid" id="Q9TT93"/>
<dbReference type="OrthoDB" id="412680at2759"/>
<dbReference type="PRO" id="PR:Q9TT93"/>
<dbReference type="Proteomes" id="UP000009136">
    <property type="component" value="Unplaced"/>
</dbReference>
<dbReference type="GO" id="GO:0031012">
    <property type="term" value="C:extracellular matrix"/>
    <property type="evidence" value="ECO:0000318"/>
    <property type="project" value="GO_Central"/>
</dbReference>
<dbReference type="GO" id="GO:0005576">
    <property type="term" value="C:extracellular region"/>
    <property type="evidence" value="ECO:0007669"/>
    <property type="project" value="UniProtKB-KW"/>
</dbReference>
<dbReference type="GO" id="GO:0046872">
    <property type="term" value="F:metal ion binding"/>
    <property type="evidence" value="ECO:0007669"/>
    <property type="project" value="UniProtKB-KW"/>
</dbReference>
<dbReference type="GO" id="GO:0004222">
    <property type="term" value="F:metalloendopeptidase activity"/>
    <property type="evidence" value="ECO:0000318"/>
    <property type="project" value="GO_Central"/>
</dbReference>
<dbReference type="GO" id="GO:0008237">
    <property type="term" value="F:metallopeptidase activity"/>
    <property type="evidence" value="ECO:0000314"/>
    <property type="project" value="UniProtKB"/>
</dbReference>
<dbReference type="GO" id="GO:0008233">
    <property type="term" value="F:peptidase activity"/>
    <property type="evidence" value="ECO:0000250"/>
    <property type="project" value="UniProtKB"/>
</dbReference>
<dbReference type="GO" id="GO:0030198">
    <property type="term" value="P:extracellular matrix organization"/>
    <property type="evidence" value="ECO:0000318"/>
    <property type="project" value="GO_Central"/>
</dbReference>
<dbReference type="GO" id="GO:0006508">
    <property type="term" value="P:proteolysis"/>
    <property type="evidence" value="ECO:0000318"/>
    <property type="project" value="GO_Central"/>
</dbReference>
<dbReference type="CDD" id="cd04273">
    <property type="entry name" value="ZnMc_ADAMTS_like"/>
    <property type="match status" value="1"/>
</dbReference>
<dbReference type="FunFam" id="2.20.100.10:FF:000006">
    <property type="entry name" value="A disintegrin and metalloproteinase with thrombospondin motifs 1"/>
    <property type="match status" value="1"/>
</dbReference>
<dbReference type="FunFam" id="2.60.120.830:FF:000001">
    <property type="entry name" value="A disintegrin and metalloproteinase with thrombospondin motifs 1"/>
    <property type="match status" value="1"/>
</dbReference>
<dbReference type="FunFam" id="3.40.1620.60:FF:000003">
    <property type="entry name" value="A disintegrin and metalloproteinase with thrombospondin motifs 1"/>
    <property type="match status" value="1"/>
</dbReference>
<dbReference type="FunFam" id="3.40.390.10:FF:000001">
    <property type="entry name" value="A disintegrin and metalloproteinase with thrombospondin motifs 1"/>
    <property type="match status" value="1"/>
</dbReference>
<dbReference type="Gene3D" id="2.60.120.830">
    <property type="match status" value="1"/>
</dbReference>
<dbReference type="Gene3D" id="3.40.1620.60">
    <property type="match status" value="1"/>
</dbReference>
<dbReference type="Gene3D" id="3.40.390.10">
    <property type="entry name" value="Collagenase (Catalytic Domain)"/>
    <property type="match status" value="1"/>
</dbReference>
<dbReference type="Gene3D" id="2.20.100.10">
    <property type="entry name" value="Thrombospondin type-1 (TSP1) repeat"/>
    <property type="match status" value="1"/>
</dbReference>
<dbReference type="InterPro" id="IPR006586">
    <property type="entry name" value="ADAM_Cys-rich"/>
</dbReference>
<dbReference type="InterPro" id="IPR013273">
    <property type="entry name" value="ADAMTS/ADAMTS-like"/>
</dbReference>
<dbReference type="InterPro" id="IPR050439">
    <property type="entry name" value="ADAMTS_ADAMTS-like"/>
</dbReference>
<dbReference type="InterPro" id="IPR041645">
    <property type="entry name" value="ADAMTS_CR_2"/>
</dbReference>
<dbReference type="InterPro" id="IPR045371">
    <property type="entry name" value="ADAMTS_CR_3"/>
</dbReference>
<dbReference type="InterPro" id="IPR010294">
    <property type="entry name" value="ADAMTS_spacer1"/>
</dbReference>
<dbReference type="InterPro" id="IPR024079">
    <property type="entry name" value="MetalloPept_cat_dom_sf"/>
</dbReference>
<dbReference type="InterPro" id="IPR001590">
    <property type="entry name" value="Peptidase_M12B"/>
</dbReference>
<dbReference type="InterPro" id="IPR000884">
    <property type="entry name" value="TSP1_rpt"/>
</dbReference>
<dbReference type="InterPro" id="IPR036383">
    <property type="entry name" value="TSP1_rpt_sf"/>
</dbReference>
<dbReference type="PANTHER" id="PTHR13723:SF38">
    <property type="entry name" value="A DISINTEGRIN AND METALLOPROTEINASE WITH THROMBOSPONDIN MOTIFS 4"/>
    <property type="match status" value="1"/>
</dbReference>
<dbReference type="PANTHER" id="PTHR13723">
    <property type="entry name" value="ADAMTS A DISINTEGRIN AND METALLOPROTEASE WITH THROMBOSPONDIN MOTIFS PROTEASE"/>
    <property type="match status" value="1"/>
</dbReference>
<dbReference type="Pfam" id="PF17771">
    <property type="entry name" value="ADAMTS_CR_2"/>
    <property type="match status" value="1"/>
</dbReference>
<dbReference type="Pfam" id="PF19236">
    <property type="entry name" value="ADAMTS_CR_3"/>
    <property type="match status" value="1"/>
</dbReference>
<dbReference type="Pfam" id="PF05986">
    <property type="entry name" value="ADAMTS_spacer1"/>
    <property type="match status" value="1"/>
</dbReference>
<dbReference type="Pfam" id="PF01421">
    <property type="entry name" value="Reprolysin"/>
    <property type="match status" value="1"/>
</dbReference>
<dbReference type="Pfam" id="PF00090">
    <property type="entry name" value="TSP_1"/>
    <property type="match status" value="1"/>
</dbReference>
<dbReference type="PRINTS" id="PR01857">
    <property type="entry name" value="ADAMTSFAMILY"/>
</dbReference>
<dbReference type="SMART" id="SM00608">
    <property type="entry name" value="ACR"/>
    <property type="match status" value="1"/>
</dbReference>
<dbReference type="SMART" id="SM00209">
    <property type="entry name" value="TSP1"/>
    <property type="match status" value="1"/>
</dbReference>
<dbReference type="SUPFAM" id="SSF55486">
    <property type="entry name" value="Metalloproteases ('zincins'), catalytic domain"/>
    <property type="match status" value="1"/>
</dbReference>
<dbReference type="SUPFAM" id="SSF82895">
    <property type="entry name" value="TSP-1 type 1 repeat"/>
    <property type="match status" value="1"/>
</dbReference>
<dbReference type="PROSITE" id="PS50215">
    <property type="entry name" value="ADAM_MEPRO"/>
    <property type="match status" value="1"/>
</dbReference>
<dbReference type="PROSITE" id="PS50092">
    <property type="entry name" value="TSP1"/>
    <property type="match status" value="1"/>
</dbReference>
<dbReference type="PROSITE" id="PS00142">
    <property type="entry name" value="ZINC_PROTEASE"/>
    <property type="match status" value="1"/>
</dbReference>
<comment type="function">
    <text evidence="2 8">Cleaves aggrecan, a cartilage proteoglycan, at the '392-Glu-|-Ala-393' site and may be involved in its turnover (PubMed:10356395). Also cleaves COMP (By similarity). May play an important role in the destruction of aggrecan in arthritic diseases.</text>
</comment>
<comment type="catalytic activity">
    <reaction>
        <text>Glutamyl endopeptidase. Bonds cleaved include 370-Thr-Glu-Gly-Glu-|-Ala-Arg-Gly-Ser-377 in the interglobular domain of mammalian aggrecan.</text>
        <dbReference type="EC" id="3.4.24.82"/>
    </reaction>
</comment>
<comment type="cofactor">
    <cofactor evidence="2">
        <name>Zn(2+)</name>
        <dbReference type="ChEBI" id="CHEBI:29105"/>
    </cofactor>
    <text evidence="2">Binds 1 zinc ion per subunit.</text>
</comment>
<comment type="subunit">
    <text evidence="1">Interacts with SRPX2.</text>
</comment>
<comment type="subcellular location">
    <subcellularLocation>
        <location evidence="1">Secreted</location>
        <location evidence="1">Extracellular space</location>
        <location evidence="1">Extracellular matrix</location>
    </subcellularLocation>
</comment>
<comment type="induction">
    <text>By interleukin-1.</text>
</comment>
<comment type="domain">
    <text evidence="2">The spacer domain and the TSP type-1 domains are important for a tight interaction with the extracellular matrix. The spacer domain is also required for cleavage of COMP (By similarity).</text>
</comment>
<comment type="domain">
    <text>The conserved cysteine present in the cysteine-switch motif binds the catalytic zinc ion, thus inhibiting the enzyme. The dissociation of the cysteine from the zinc ion upon the activation-peptide release activates the enzyme.</text>
</comment>
<comment type="PTM">
    <text evidence="1">The precursor is cleaved by a furin endopeptidase.</text>
</comment>
<comment type="PTM">
    <text evidence="1">Glycosylated. Can be O-fucosylated by POFUT2 on a serine or a threonine residue found within the consensus sequence C1-X(2)-(S/T)-C2-G of the TSP type-1 repeat domains where C1 and C2 are the first and second cysteine residue of the repeat, respectively. Fucosylated repeats can then be further glycosylated by the addition of a beta-1,3-glucose residue by the glucosyltransferase, B3GALTL. Fucosylation mediates the efficient secretion of ADAMTS family members. Can also be C-glycosylated with one or two mannose molecules on tryptophan residues within the consensus sequence W-X-X-W of the TPRs, and N-glycosylated. These other glycosylations can also facilitate secretion (By similarity).</text>
</comment>
<comment type="caution">
    <text evidence="9">Has sometimes been referred to as ADAMTS2.</text>
</comment>
<gene>
    <name type="primary">ADAMTS4</name>
</gene>
<feature type="signal peptide" evidence="3">
    <location>
        <begin position="1"/>
        <end position="51"/>
    </location>
</feature>
<feature type="propeptide" id="PRO_0000239802" evidence="8">
    <location>
        <begin position="52"/>
        <end position="212"/>
    </location>
</feature>
<feature type="chain" id="PRO_0000078209" description="A disintegrin and metalloproteinase with thrombospondin motifs 4">
    <location>
        <begin position="213"/>
        <end position="839"/>
    </location>
</feature>
<feature type="domain" description="Peptidase M12B" evidence="5">
    <location>
        <begin position="218"/>
        <end position="428"/>
    </location>
</feature>
<feature type="domain" description="Disintegrin">
    <location>
        <begin position="437"/>
        <end position="519"/>
    </location>
</feature>
<feature type="domain" description="TSP type-1" evidence="4">
    <location>
        <begin position="520"/>
        <end position="575"/>
    </location>
</feature>
<feature type="region of interest" description="Disordered" evidence="7">
    <location>
        <begin position="166"/>
        <end position="209"/>
    </location>
</feature>
<feature type="region of interest" description="Spacer" evidence="1">
    <location>
        <begin position="686"/>
        <end position="839"/>
    </location>
</feature>
<feature type="short sequence motif" description="Cysteine switch" evidence="1">
    <location>
        <begin position="192"/>
        <end position="199"/>
    </location>
</feature>
<feature type="active site" evidence="5 6">
    <location>
        <position position="362"/>
    </location>
</feature>
<feature type="binding site" description="in inhibited form" evidence="1">
    <location>
        <position position="194"/>
    </location>
    <ligand>
        <name>Zn(2+)</name>
        <dbReference type="ChEBI" id="CHEBI:29105"/>
        <note>catalytic</note>
    </ligand>
</feature>
<feature type="binding site" evidence="2">
    <location>
        <position position="361"/>
    </location>
    <ligand>
        <name>Zn(2+)</name>
        <dbReference type="ChEBI" id="CHEBI:29105"/>
        <note>catalytic</note>
    </ligand>
</feature>
<feature type="binding site" evidence="2">
    <location>
        <position position="365"/>
    </location>
    <ligand>
        <name>Zn(2+)</name>
        <dbReference type="ChEBI" id="CHEBI:29105"/>
        <note>catalytic</note>
    </ligand>
</feature>
<feature type="binding site" evidence="2">
    <location>
        <position position="371"/>
    </location>
    <ligand>
        <name>Zn(2+)</name>
        <dbReference type="ChEBI" id="CHEBI:29105"/>
        <note>catalytic</note>
    </ligand>
</feature>
<feature type="glycosylation site" description="N-linked (GlcNAc...) asparagine" evidence="3">
    <location>
        <position position="68"/>
    </location>
</feature>
<feature type="disulfide bond" evidence="2">
    <location>
        <begin position="293"/>
        <end position="345"/>
    </location>
</feature>
<feature type="disulfide bond" evidence="2">
    <location>
        <begin position="322"/>
        <end position="327"/>
    </location>
</feature>
<feature type="disulfide bond" evidence="2">
    <location>
        <begin position="339"/>
        <end position="423"/>
    </location>
</feature>
<feature type="disulfide bond" evidence="2">
    <location>
        <begin position="377"/>
        <end position="407"/>
    </location>
</feature>
<feature type="disulfide bond" evidence="2">
    <location>
        <begin position="449"/>
        <end position="472"/>
    </location>
</feature>
<feature type="disulfide bond" evidence="2">
    <location>
        <begin position="460"/>
        <end position="482"/>
    </location>
</feature>
<feature type="disulfide bond" evidence="2">
    <location>
        <begin position="467"/>
        <end position="501"/>
    </location>
</feature>
<feature type="disulfide bond" evidence="2">
    <location>
        <begin position="495"/>
        <end position="506"/>
    </location>
</feature>
<feature type="disulfide bond" evidence="1">
    <location>
        <begin position="532"/>
        <end position="569"/>
    </location>
</feature>
<feature type="disulfide bond" evidence="1">
    <location>
        <begin position="536"/>
        <end position="574"/>
    </location>
</feature>
<feature type="disulfide bond" evidence="1">
    <location>
        <begin position="547"/>
        <end position="559"/>
    </location>
</feature>
<sequence length="839" mass="90280">MSHMDSHPGRGLADGWLWGIQPRLLLPTVPVSGSRLVWLLLLASLLPSAWPASPLPREEEIVFPEKLNGSVLPGLGAPARLLYRLPAFGETLLLELEKDPGVQVEGLTVQYLGRAPELLGGAEPGTYLTGTINGDPESVASLHWDGGALLGVLQYRGTELHIQPLEGGAPNSAGGPGAHILRRKSPVSGQGPMCNVKAPPGKPSPSPRRAKRFASLSRFVETLVVADDKMAAFHGAGLKRYLLTVMAAAAKAFKHPSIRNPVSLVVTRLVVLGPGEEGPQVGPSAAQTLRSFCAWQRGLNTPDDADPGHFDTAILFTRQDLCGVSTCDTLGMADVGTVCDPARSCAIVEDDGLQSAFTAAHELGHVFSMLHDNSKQCTGLNGPESTSRHVMAPVMAHVDPEEPWSPCSARFITDFLDNGFGHCLLDKPEAPLHLPVTFPGKDYDADRQCQLTFGPDSRHCPQLPPPCAALWCSGHLNGHAMCQTKHSPWADGTPCGPAQACMGGRCLHVDQLQAFNVPQAGGWGPWGSWGDCSRSCGGGVQFSSRDCTRPVPRNGGKYCEGRRTRFRSCNTQDCPTGSALTFREEQCAAYNHRTDLFKNFPGPMDWVPRYTGVAPRDQCKLTCQTRALGYYYVLDPRVADGTPCSPDSSSVCVQGRCIHAGCDRVIGSKKKFDKCMVCGGDGSSCSKQSGSFKKFRYGYNNVVTIPAGATHILVRQQGSPSVRSLYLALKLPDGSYALNGEYTLIPSPTDVVLPGAVSLRYSGATAASETLSGHGPLAEPLTLQVLVAGNPQNARLRYSFFVPRPRPVPSTPRPTPQDWLRRKSQILEILRRRSWAGRK</sequence>